<feature type="chain" id="PRO_0000205886" description="Cell division topological specificity factor">
    <location>
        <begin position="1"/>
        <end position="88"/>
    </location>
</feature>
<reference key="1">
    <citation type="journal article" date="2001" name="Nature">
        <title>Complete genome sequence of a multiple drug resistant Salmonella enterica serovar Typhi CT18.</title>
        <authorList>
            <person name="Parkhill J."/>
            <person name="Dougan G."/>
            <person name="James K.D."/>
            <person name="Thomson N.R."/>
            <person name="Pickard D."/>
            <person name="Wain J."/>
            <person name="Churcher C.M."/>
            <person name="Mungall K.L."/>
            <person name="Bentley S.D."/>
            <person name="Holden M.T.G."/>
            <person name="Sebaihia M."/>
            <person name="Baker S."/>
            <person name="Basham D."/>
            <person name="Brooks K."/>
            <person name="Chillingworth T."/>
            <person name="Connerton P."/>
            <person name="Cronin A."/>
            <person name="Davis P."/>
            <person name="Davies R.M."/>
            <person name="Dowd L."/>
            <person name="White N."/>
            <person name="Farrar J."/>
            <person name="Feltwell T."/>
            <person name="Hamlin N."/>
            <person name="Haque A."/>
            <person name="Hien T.T."/>
            <person name="Holroyd S."/>
            <person name="Jagels K."/>
            <person name="Krogh A."/>
            <person name="Larsen T.S."/>
            <person name="Leather S."/>
            <person name="Moule S."/>
            <person name="O'Gaora P."/>
            <person name="Parry C."/>
            <person name="Quail M.A."/>
            <person name="Rutherford K.M."/>
            <person name="Simmonds M."/>
            <person name="Skelton J."/>
            <person name="Stevens K."/>
            <person name="Whitehead S."/>
            <person name="Barrell B.G."/>
        </authorList>
    </citation>
    <scope>NUCLEOTIDE SEQUENCE [LARGE SCALE GENOMIC DNA]</scope>
    <source>
        <strain>CT18</strain>
    </source>
</reference>
<reference key="2">
    <citation type="journal article" date="2003" name="J. Bacteriol.">
        <title>Comparative genomics of Salmonella enterica serovar Typhi strains Ty2 and CT18.</title>
        <authorList>
            <person name="Deng W."/>
            <person name="Liou S.-R."/>
            <person name="Plunkett G. III"/>
            <person name="Mayhew G.F."/>
            <person name="Rose D.J."/>
            <person name="Burland V."/>
            <person name="Kodoyianni V."/>
            <person name="Schwartz D.C."/>
            <person name="Blattner F.R."/>
        </authorList>
    </citation>
    <scope>NUCLEOTIDE SEQUENCE [LARGE SCALE GENOMIC DNA]</scope>
    <source>
        <strain>ATCC 700931 / Ty2</strain>
    </source>
</reference>
<name>MINE_SALTI</name>
<protein>
    <recommendedName>
        <fullName evidence="1">Cell division topological specificity factor</fullName>
    </recommendedName>
</protein>
<sequence>MALLDFFLSRKKSTANIAKERLQIIVAERRRSDAEPHYLPQLRKDILEVICKYVQIDPEMVTVQLEQKDGDISILELNVTLPEAEESK</sequence>
<evidence type="ECO:0000255" key="1">
    <source>
        <dbReference type="HAMAP-Rule" id="MF_00262"/>
    </source>
</evidence>
<proteinExistence type="inferred from homology"/>
<comment type="function">
    <text evidence="1">Prevents the cell division inhibition by proteins MinC and MinD at internal division sites while permitting inhibition at polar sites. This ensures cell division at the proper site by restricting the formation of a division septum at the midpoint of the long axis of the cell.</text>
</comment>
<comment type="similarity">
    <text evidence="1">Belongs to the MinE family.</text>
</comment>
<dbReference type="EMBL" id="AL513382">
    <property type="protein sequence ID" value="CAD05499.1"/>
    <property type="molecule type" value="Genomic_DNA"/>
</dbReference>
<dbReference type="EMBL" id="AE014613">
    <property type="protein sequence ID" value="AAO68727.1"/>
    <property type="molecule type" value="Genomic_DNA"/>
</dbReference>
<dbReference type="RefSeq" id="NP_456323.1">
    <property type="nucleotide sequence ID" value="NC_003198.1"/>
</dbReference>
<dbReference type="RefSeq" id="WP_001185666.1">
    <property type="nucleotide sequence ID" value="NZ_WSUR01000004.1"/>
</dbReference>
<dbReference type="SMR" id="P65364"/>
<dbReference type="STRING" id="220341.gene:17585864"/>
<dbReference type="GeneID" id="92972923"/>
<dbReference type="KEGG" id="stt:t1061"/>
<dbReference type="KEGG" id="sty:STY1946"/>
<dbReference type="PATRIC" id="fig|220341.7.peg.1963"/>
<dbReference type="eggNOG" id="COG0851">
    <property type="taxonomic scope" value="Bacteria"/>
</dbReference>
<dbReference type="HOGENOM" id="CLU_137929_2_2_6"/>
<dbReference type="OMA" id="FNKQRTA"/>
<dbReference type="OrthoDB" id="9802655at2"/>
<dbReference type="Proteomes" id="UP000000541">
    <property type="component" value="Chromosome"/>
</dbReference>
<dbReference type="Proteomes" id="UP000002670">
    <property type="component" value="Chromosome"/>
</dbReference>
<dbReference type="GO" id="GO:0051301">
    <property type="term" value="P:cell division"/>
    <property type="evidence" value="ECO:0007669"/>
    <property type="project" value="UniProtKB-KW"/>
</dbReference>
<dbReference type="GO" id="GO:0032955">
    <property type="term" value="P:regulation of division septum assembly"/>
    <property type="evidence" value="ECO:0007669"/>
    <property type="project" value="InterPro"/>
</dbReference>
<dbReference type="FunFam" id="3.30.1070.10:FF:000001">
    <property type="entry name" value="Cell division topological specificity factor"/>
    <property type="match status" value="1"/>
</dbReference>
<dbReference type="Gene3D" id="3.30.1070.10">
    <property type="entry name" value="Cell division topological specificity factor MinE"/>
    <property type="match status" value="1"/>
</dbReference>
<dbReference type="HAMAP" id="MF_00262">
    <property type="entry name" value="MinE"/>
    <property type="match status" value="1"/>
</dbReference>
<dbReference type="InterPro" id="IPR005527">
    <property type="entry name" value="MinE"/>
</dbReference>
<dbReference type="InterPro" id="IPR036707">
    <property type="entry name" value="MinE_sf"/>
</dbReference>
<dbReference type="NCBIfam" id="TIGR01215">
    <property type="entry name" value="minE"/>
    <property type="match status" value="1"/>
</dbReference>
<dbReference type="NCBIfam" id="NF001422">
    <property type="entry name" value="PRK00296.1"/>
    <property type="match status" value="1"/>
</dbReference>
<dbReference type="Pfam" id="PF03776">
    <property type="entry name" value="MinE"/>
    <property type="match status" value="1"/>
</dbReference>
<dbReference type="SUPFAM" id="SSF55229">
    <property type="entry name" value="Cell division protein MinE topological specificity domain"/>
    <property type="match status" value="1"/>
</dbReference>
<gene>
    <name evidence="1" type="primary">minE</name>
    <name type="ordered locus">STY1946</name>
    <name type="ordered locus">t1061</name>
</gene>
<organism>
    <name type="scientific">Salmonella typhi</name>
    <dbReference type="NCBI Taxonomy" id="90370"/>
    <lineage>
        <taxon>Bacteria</taxon>
        <taxon>Pseudomonadati</taxon>
        <taxon>Pseudomonadota</taxon>
        <taxon>Gammaproteobacteria</taxon>
        <taxon>Enterobacterales</taxon>
        <taxon>Enterobacteriaceae</taxon>
        <taxon>Salmonella</taxon>
    </lineage>
</organism>
<keyword id="KW-0131">Cell cycle</keyword>
<keyword id="KW-0132">Cell division</keyword>
<accession>P65364</accession>
<accession>Q8XGH2</accession>